<evidence type="ECO:0000255" key="1">
    <source>
        <dbReference type="HAMAP-Rule" id="MF_00144"/>
    </source>
</evidence>
<gene>
    <name evidence="1" type="primary">mnmA</name>
    <name type="ordered locus">syc2494_d</name>
</gene>
<sequence>MERVVVGLSGGVDSSVAAALLHRQGYAVEGLTLWLMKGKGQCCSEGMVDAAGICEQMGVPYHVVDSRDRFQEAIVDYVVQGYEAGITPLPCSQCNRAVKFGPMLDYAKTELKADAIATGHYARLRQNPETGRTELLRAVDRNKDQTYFLYDLPQSVLQSVKFPLGELTKPETRQIAAELGLRTAEKPESQDLCLAEVHGSMRAFLDRYIESREGEIVDQSGRVLGKHTGIHHYTIGQRKGLGIAHSEPLYVIAIDPIQNRVVVGDRHSAAQSECTVSRVNWVSIAQPDAPIQAAVQVRYRSAPVPCTVIPLAGDRARILFADPQFSITPGQAAVWYDGDRLLGGGLIDRVERTTEPV</sequence>
<proteinExistence type="inferred from homology"/>
<keyword id="KW-0067">ATP-binding</keyword>
<keyword id="KW-0963">Cytoplasm</keyword>
<keyword id="KW-1015">Disulfide bond</keyword>
<keyword id="KW-0547">Nucleotide-binding</keyword>
<keyword id="KW-0694">RNA-binding</keyword>
<keyword id="KW-0808">Transferase</keyword>
<keyword id="KW-0819">tRNA processing</keyword>
<keyword id="KW-0820">tRNA-binding</keyword>
<accession>Q5MZ36</accession>
<comment type="function">
    <text evidence="1">Catalyzes the 2-thiolation of uridine at the wobble position (U34) of tRNA, leading to the formation of s(2)U34.</text>
</comment>
<comment type="catalytic activity">
    <reaction evidence="1">
        <text>S-sulfanyl-L-cysteinyl-[protein] + uridine(34) in tRNA + AH2 + ATP = 2-thiouridine(34) in tRNA + L-cysteinyl-[protein] + A + AMP + diphosphate + H(+)</text>
        <dbReference type="Rhea" id="RHEA:47032"/>
        <dbReference type="Rhea" id="RHEA-COMP:10131"/>
        <dbReference type="Rhea" id="RHEA-COMP:11726"/>
        <dbReference type="Rhea" id="RHEA-COMP:11727"/>
        <dbReference type="Rhea" id="RHEA-COMP:11728"/>
        <dbReference type="ChEBI" id="CHEBI:13193"/>
        <dbReference type="ChEBI" id="CHEBI:15378"/>
        <dbReference type="ChEBI" id="CHEBI:17499"/>
        <dbReference type="ChEBI" id="CHEBI:29950"/>
        <dbReference type="ChEBI" id="CHEBI:30616"/>
        <dbReference type="ChEBI" id="CHEBI:33019"/>
        <dbReference type="ChEBI" id="CHEBI:61963"/>
        <dbReference type="ChEBI" id="CHEBI:65315"/>
        <dbReference type="ChEBI" id="CHEBI:87170"/>
        <dbReference type="ChEBI" id="CHEBI:456215"/>
        <dbReference type="EC" id="2.8.1.13"/>
    </reaction>
</comment>
<comment type="subcellular location">
    <subcellularLocation>
        <location evidence="1">Cytoplasm</location>
    </subcellularLocation>
</comment>
<comment type="similarity">
    <text evidence="1">Belongs to the MnmA/TRMU family.</text>
</comment>
<dbReference type="EC" id="2.8.1.13" evidence="1"/>
<dbReference type="EMBL" id="AP008231">
    <property type="protein sequence ID" value="BAD80684.1"/>
    <property type="molecule type" value="Genomic_DNA"/>
</dbReference>
<dbReference type="RefSeq" id="WP_011244804.1">
    <property type="nucleotide sequence ID" value="NZ_CP085785.1"/>
</dbReference>
<dbReference type="SMR" id="Q5MZ36"/>
<dbReference type="GeneID" id="72430456"/>
<dbReference type="KEGG" id="syc:syc2494_d"/>
<dbReference type="eggNOG" id="COG0482">
    <property type="taxonomic scope" value="Bacteria"/>
</dbReference>
<dbReference type="Proteomes" id="UP000001175">
    <property type="component" value="Chromosome"/>
</dbReference>
<dbReference type="GO" id="GO:0005737">
    <property type="term" value="C:cytoplasm"/>
    <property type="evidence" value="ECO:0007669"/>
    <property type="project" value="UniProtKB-SubCell"/>
</dbReference>
<dbReference type="GO" id="GO:0005524">
    <property type="term" value="F:ATP binding"/>
    <property type="evidence" value="ECO:0007669"/>
    <property type="project" value="UniProtKB-KW"/>
</dbReference>
<dbReference type="GO" id="GO:0000049">
    <property type="term" value="F:tRNA binding"/>
    <property type="evidence" value="ECO:0007669"/>
    <property type="project" value="UniProtKB-KW"/>
</dbReference>
<dbReference type="GO" id="GO:0103016">
    <property type="term" value="F:tRNA-uridine 2-sulfurtransferase activity"/>
    <property type="evidence" value="ECO:0007669"/>
    <property type="project" value="UniProtKB-EC"/>
</dbReference>
<dbReference type="GO" id="GO:0002143">
    <property type="term" value="P:tRNA wobble position uridine thiolation"/>
    <property type="evidence" value="ECO:0007669"/>
    <property type="project" value="TreeGrafter"/>
</dbReference>
<dbReference type="CDD" id="cd01998">
    <property type="entry name" value="MnmA_TRMU-like"/>
    <property type="match status" value="1"/>
</dbReference>
<dbReference type="FunFam" id="2.30.30.280:FF:000001">
    <property type="entry name" value="tRNA-specific 2-thiouridylase MnmA"/>
    <property type="match status" value="1"/>
</dbReference>
<dbReference type="FunFam" id="2.40.30.10:FF:000023">
    <property type="entry name" value="tRNA-specific 2-thiouridylase MnmA"/>
    <property type="match status" value="1"/>
</dbReference>
<dbReference type="FunFam" id="3.40.50.620:FF:000302">
    <property type="entry name" value="tRNA-specific 2-thiouridylase MnmA"/>
    <property type="match status" value="1"/>
</dbReference>
<dbReference type="Gene3D" id="2.30.30.280">
    <property type="entry name" value="Adenine nucleotide alpha hydrolases-like domains"/>
    <property type="match status" value="1"/>
</dbReference>
<dbReference type="Gene3D" id="3.40.50.620">
    <property type="entry name" value="HUPs"/>
    <property type="match status" value="1"/>
</dbReference>
<dbReference type="Gene3D" id="2.40.30.10">
    <property type="entry name" value="Translation factors"/>
    <property type="match status" value="1"/>
</dbReference>
<dbReference type="HAMAP" id="MF_00144">
    <property type="entry name" value="tRNA_thiouridyl_MnmA"/>
    <property type="match status" value="1"/>
</dbReference>
<dbReference type="InterPro" id="IPR004506">
    <property type="entry name" value="MnmA-like"/>
</dbReference>
<dbReference type="InterPro" id="IPR046885">
    <property type="entry name" value="MnmA-like_C"/>
</dbReference>
<dbReference type="InterPro" id="IPR046884">
    <property type="entry name" value="MnmA-like_central"/>
</dbReference>
<dbReference type="InterPro" id="IPR023382">
    <property type="entry name" value="MnmA-like_central_sf"/>
</dbReference>
<dbReference type="InterPro" id="IPR014729">
    <property type="entry name" value="Rossmann-like_a/b/a_fold"/>
</dbReference>
<dbReference type="NCBIfam" id="NF001138">
    <property type="entry name" value="PRK00143.1"/>
    <property type="match status" value="1"/>
</dbReference>
<dbReference type="NCBIfam" id="TIGR00420">
    <property type="entry name" value="trmU"/>
    <property type="match status" value="1"/>
</dbReference>
<dbReference type="PANTHER" id="PTHR11933:SF5">
    <property type="entry name" value="MITOCHONDRIAL TRNA-SPECIFIC 2-THIOURIDYLASE 1"/>
    <property type="match status" value="1"/>
</dbReference>
<dbReference type="PANTHER" id="PTHR11933">
    <property type="entry name" value="TRNA 5-METHYLAMINOMETHYL-2-THIOURIDYLATE -METHYLTRANSFERASE"/>
    <property type="match status" value="1"/>
</dbReference>
<dbReference type="Pfam" id="PF03054">
    <property type="entry name" value="tRNA_Me_trans"/>
    <property type="match status" value="1"/>
</dbReference>
<dbReference type="Pfam" id="PF20258">
    <property type="entry name" value="tRNA_Me_trans_C"/>
    <property type="match status" value="1"/>
</dbReference>
<dbReference type="Pfam" id="PF20259">
    <property type="entry name" value="tRNA_Me_trans_M"/>
    <property type="match status" value="1"/>
</dbReference>
<dbReference type="SUPFAM" id="SSF52402">
    <property type="entry name" value="Adenine nucleotide alpha hydrolases-like"/>
    <property type="match status" value="1"/>
</dbReference>
<organism>
    <name type="scientific">Synechococcus sp. (strain ATCC 27144 / PCC 6301 / SAUG 1402/1)</name>
    <name type="common">Anacystis nidulans</name>
    <dbReference type="NCBI Taxonomy" id="269084"/>
    <lineage>
        <taxon>Bacteria</taxon>
        <taxon>Bacillati</taxon>
        <taxon>Cyanobacteriota</taxon>
        <taxon>Cyanophyceae</taxon>
        <taxon>Synechococcales</taxon>
        <taxon>Synechococcaceae</taxon>
        <taxon>Synechococcus</taxon>
    </lineage>
</organism>
<protein>
    <recommendedName>
        <fullName evidence="1">tRNA-specific 2-thiouridylase MnmA</fullName>
        <ecNumber evidence="1">2.8.1.13</ecNumber>
    </recommendedName>
</protein>
<name>MNMA_SYNP6</name>
<feature type="chain" id="PRO_0000349824" description="tRNA-specific 2-thiouridylase MnmA">
    <location>
        <begin position="1"/>
        <end position="357"/>
    </location>
</feature>
<feature type="region of interest" description="Interaction with tRNA" evidence="1">
    <location>
        <begin position="143"/>
        <end position="145"/>
    </location>
</feature>
<feature type="region of interest" description="Interaction with tRNA" evidence="1">
    <location>
        <begin position="298"/>
        <end position="299"/>
    </location>
</feature>
<feature type="active site" description="Nucleophile" evidence="1">
    <location>
        <position position="94"/>
    </location>
</feature>
<feature type="active site" description="Cysteine persulfide intermediate" evidence="1">
    <location>
        <position position="193"/>
    </location>
</feature>
<feature type="binding site" evidence="1">
    <location>
        <begin position="7"/>
        <end position="14"/>
    </location>
    <ligand>
        <name>ATP</name>
        <dbReference type="ChEBI" id="CHEBI:30616"/>
    </ligand>
</feature>
<feature type="binding site" evidence="1">
    <location>
        <position position="33"/>
    </location>
    <ligand>
        <name>ATP</name>
        <dbReference type="ChEBI" id="CHEBI:30616"/>
    </ligand>
</feature>
<feature type="binding site" evidence="1">
    <location>
        <position position="119"/>
    </location>
    <ligand>
        <name>ATP</name>
        <dbReference type="ChEBI" id="CHEBI:30616"/>
    </ligand>
</feature>
<feature type="site" description="Interaction with tRNA" evidence="1">
    <location>
        <position position="120"/>
    </location>
</feature>
<feature type="site" description="Interaction with tRNA" evidence="1">
    <location>
        <position position="331"/>
    </location>
</feature>
<feature type="disulfide bond" description="Alternate" evidence="1">
    <location>
        <begin position="94"/>
        <end position="193"/>
    </location>
</feature>
<reference key="1">
    <citation type="journal article" date="2007" name="Photosyn. Res.">
        <title>Complete nucleotide sequence of the freshwater unicellular cyanobacterium Synechococcus elongatus PCC 6301 chromosome: gene content and organization.</title>
        <authorList>
            <person name="Sugita C."/>
            <person name="Ogata K."/>
            <person name="Shikata M."/>
            <person name="Jikuya H."/>
            <person name="Takano J."/>
            <person name="Furumichi M."/>
            <person name="Kanehisa M."/>
            <person name="Omata T."/>
            <person name="Sugiura M."/>
            <person name="Sugita M."/>
        </authorList>
    </citation>
    <scope>NUCLEOTIDE SEQUENCE [LARGE SCALE GENOMIC DNA]</scope>
    <source>
        <strain>ATCC 27144 / PCC 6301 / SAUG 1402/1</strain>
    </source>
</reference>